<name>GLC7B_CAEBR</name>
<comment type="function">
    <text evidence="2">Serine/threonine-protein phosphatase essential for chromosomal dynamics during meiosis and mitosis. Antagonizes the function of air-2 in the regulation of chromosome cohesion. Dephosphorylates histone H3 at 'Ser-10'. Also involved in the activation of chloride channel clh-3 during cell swelling and meiotic maturation. Essential for embryogenesis (By similarity).</text>
</comment>
<comment type="catalytic activity">
    <reaction evidence="2">
        <text>O-phospho-L-seryl-[protein] + H2O = L-seryl-[protein] + phosphate</text>
        <dbReference type="Rhea" id="RHEA:20629"/>
        <dbReference type="Rhea" id="RHEA-COMP:9863"/>
        <dbReference type="Rhea" id="RHEA-COMP:11604"/>
        <dbReference type="ChEBI" id="CHEBI:15377"/>
        <dbReference type="ChEBI" id="CHEBI:29999"/>
        <dbReference type="ChEBI" id="CHEBI:43474"/>
        <dbReference type="ChEBI" id="CHEBI:83421"/>
        <dbReference type="EC" id="3.1.3.16"/>
    </reaction>
</comment>
<comment type="catalytic activity">
    <reaction evidence="2">
        <text>O-phospho-L-threonyl-[protein] + H2O = L-threonyl-[protein] + phosphate</text>
        <dbReference type="Rhea" id="RHEA:47004"/>
        <dbReference type="Rhea" id="RHEA-COMP:11060"/>
        <dbReference type="Rhea" id="RHEA-COMP:11605"/>
        <dbReference type="ChEBI" id="CHEBI:15377"/>
        <dbReference type="ChEBI" id="CHEBI:30013"/>
        <dbReference type="ChEBI" id="CHEBI:43474"/>
        <dbReference type="ChEBI" id="CHEBI:61977"/>
        <dbReference type="EC" id="3.1.3.16"/>
    </reaction>
</comment>
<comment type="cofactor">
    <cofactor evidence="3">
        <name>Mn(2+)</name>
        <dbReference type="ChEBI" id="CHEBI:29035"/>
    </cofactor>
    <text evidence="3">Binds 2 manganese ions per subunit.</text>
</comment>
<comment type="subunit">
    <text evidence="2">Interacts with lab-1; the interaction is direct. Interacts with knl-1; the interaction is direct.</text>
</comment>
<comment type="subcellular location">
    <subcellularLocation>
        <location evidence="2">Cytoplasm</location>
    </subcellularLocation>
    <subcellularLocation>
        <location evidence="2">Nucleus</location>
    </subcellularLocation>
    <text evidence="2">Localizes to nuclei in the mid-pachytene to diplotene phase of meiosis.</text>
</comment>
<comment type="similarity">
    <text evidence="5">Belongs to the PPP phosphatase family. PP-1 subfamily.</text>
</comment>
<accession>Q627N3</accession>
<accession>A8WNH6</accession>
<organism>
    <name type="scientific">Caenorhabditis briggsae</name>
    <dbReference type="NCBI Taxonomy" id="6238"/>
    <lineage>
        <taxon>Eukaryota</taxon>
        <taxon>Metazoa</taxon>
        <taxon>Ecdysozoa</taxon>
        <taxon>Nematoda</taxon>
        <taxon>Chromadorea</taxon>
        <taxon>Rhabditida</taxon>
        <taxon>Rhabditina</taxon>
        <taxon>Rhabditomorpha</taxon>
        <taxon>Rhabditoidea</taxon>
        <taxon>Rhabditidae</taxon>
        <taxon>Peloderinae</taxon>
        <taxon>Caenorhabditis</taxon>
    </lineage>
</organism>
<keyword id="KW-0131">Cell cycle</keyword>
<keyword id="KW-0132">Cell division</keyword>
<keyword id="KW-0156">Chromatin regulator</keyword>
<keyword id="KW-0963">Cytoplasm</keyword>
<keyword id="KW-0217">Developmental protein</keyword>
<keyword id="KW-0378">Hydrolase</keyword>
<keyword id="KW-0464">Manganese</keyword>
<keyword id="KW-0469">Meiosis</keyword>
<keyword id="KW-0479">Metal-binding</keyword>
<keyword id="KW-0498">Mitosis</keyword>
<keyword id="KW-0539">Nucleus</keyword>
<keyword id="KW-0904">Protein phosphatase</keyword>
<keyword id="KW-1185">Reference proteome</keyword>
<reference key="1">
    <citation type="journal article" date="2003" name="PLoS Biol.">
        <title>The genome sequence of Caenorhabditis briggsae: a platform for comparative genomics.</title>
        <authorList>
            <person name="Stein L.D."/>
            <person name="Bao Z."/>
            <person name="Blasiar D."/>
            <person name="Blumenthal T."/>
            <person name="Brent M.R."/>
            <person name="Chen N."/>
            <person name="Chinwalla A."/>
            <person name="Clarke L."/>
            <person name="Clee C."/>
            <person name="Coghlan A."/>
            <person name="Coulson A."/>
            <person name="D'Eustachio P."/>
            <person name="Fitch D.H.A."/>
            <person name="Fulton L.A."/>
            <person name="Fulton R.E."/>
            <person name="Griffiths-Jones S."/>
            <person name="Harris T.W."/>
            <person name="Hillier L.W."/>
            <person name="Kamath R."/>
            <person name="Kuwabara P.E."/>
            <person name="Mardis E.R."/>
            <person name="Marra M.A."/>
            <person name="Miner T.L."/>
            <person name="Minx P."/>
            <person name="Mullikin J.C."/>
            <person name="Plumb R.W."/>
            <person name="Rogers J."/>
            <person name="Schein J.E."/>
            <person name="Sohrmann M."/>
            <person name="Spieth J."/>
            <person name="Stajich J.E."/>
            <person name="Wei C."/>
            <person name="Willey D."/>
            <person name="Wilson R.K."/>
            <person name="Durbin R.M."/>
            <person name="Waterston R.H."/>
        </authorList>
    </citation>
    <scope>NUCLEOTIDE SEQUENCE [LARGE SCALE GENOMIC DNA]</scope>
    <source>
        <strain>AF16</strain>
    </source>
</reference>
<sequence length="333" mass="37763">MEGEKLNLDNIISRLLEVRGSKPGKNVQLTESEIKGLCQKSREIFLSQPILLELEAPLKICGDVHGQYYDLLRLFEYGGFPPESNYLFLGDYVDRGKQSLETICLLLAYKIKYPENFFLLRGNHECASINRIYGFYDECKRRYNIKLWKTFTDCFNCLPVAAIIDEKIFCCHGGLSPDLQSMEQIRRIMRPTDVPDQGLLCDLLWSDPDKDVTGWGENDRGVSFTFGPEVVAKFLHKHDLDLICRAHQVVEDGYEFFAKRQLVTLFSAPNYCGEFDNAGSMMTVDETLMCSFQILKPADKKKYPYGAGGVGSNRPVTPPRNAPAAQPKKGAKK</sequence>
<proteinExistence type="inferred from homology"/>
<gene>
    <name type="primary">gsp-2</name>
    <name type="ORF">CBG00598</name>
</gene>
<protein>
    <recommendedName>
        <fullName>Serine/threonine-protein phosphatase PP1-beta</fullName>
        <ecNumber>3.1.3.16</ecNumber>
    </recommendedName>
    <alternativeName>
        <fullName>Glc seven-like phosphatase 2</fullName>
    </alternativeName>
</protein>
<feature type="chain" id="PRO_0000268638" description="Serine/threonine-protein phosphatase PP1-beta">
    <location>
        <begin position="1"/>
        <end position="333"/>
    </location>
</feature>
<feature type="region of interest" description="Disordered" evidence="4">
    <location>
        <begin position="306"/>
        <end position="333"/>
    </location>
</feature>
<feature type="compositionally biased region" description="Low complexity" evidence="4">
    <location>
        <begin position="322"/>
        <end position="333"/>
    </location>
</feature>
<feature type="active site" description="Proton donor" evidence="1">
    <location>
        <position position="124"/>
    </location>
</feature>
<feature type="binding site" evidence="3">
    <location>
        <position position="63"/>
    </location>
    <ligand>
        <name>Mn(2+)</name>
        <dbReference type="ChEBI" id="CHEBI:29035"/>
        <label>1</label>
    </ligand>
</feature>
<feature type="binding site" evidence="3">
    <location>
        <position position="63"/>
    </location>
    <ligand>
        <name>Mn(2+)</name>
        <dbReference type="ChEBI" id="CHEBI:29035"/>
        <label>2</label>
    </ligand>
</feature>
<feature type="binding site" evidence="3">
    <location>
        <position position="65"/>
    </location>
    <ligand>
        <name>Mn(2+)</name>
        <dbReference type="ChEBI" id="CHEBI:29035"/>
        <label>1</label>
    </ligand>
</feature>
<feature type="binding site" evidence="3">
    <location>
        <position position="91"/>
    </location>
    <ligand>
        <name>Mn(2+)</name>
        <dbReference type="ChEBI" id="CHEBI:29035"/>
        <label>1</label>
    </ligand>
</feature>
<feature type="binding site" evidence="3">
    <location>
        <position position="91"/>
    </location>
    <ligand>
        <name>Mn(2+)</name>
        <dbReference type="ChEBI" id="CHEBI:29035"/>
        <label>2</label>
    </ligand>
</feature>
<feature type="binding site" evidence="3">
    <location>
        <position position="123"/>
    </location>
    <ligand>
        <name>Mn(2+)</name>
        <dbReference type="ChEBI" id="CHEBI:29035"/>
        <label>2</label>
    </ligand>
</feature>
<feature type="binding site" evidence="3">
    <location>
        <position position="172"/>
    </location>
    <ligand>
        <name>Mn(2+)</name>
        <dbReference type="ChEBI" id="CHEBI:29035"/>
        <label>2</label>
    </ligand>
</feature>
<feature type="binding site" evidence="3">
    <location>
        <position position="247"/>
    </location>
    <ligand>
        <name>Mn(2+)</name>
        <dbReference type="ChEBI" id="CHEBI:29035"/>
        <label>2</label>
    </ligand>
</feature>
<evidence type="ECO:0000250" key="1">
    <source>
        <dbReference type="UniProtKB" id="P36873"/>
    </source>
</evidence>
<evidence type="ECO:0000250" key="2">
    <source>
        <dbReference type="UniProtKB" id="P48727"/>
    </source>
</evidence>
<evidence type="ECO:0000250" key="3">
    <source>
        <dbReference type="UniProtKB" id="P62136"/>
    </source>
</evidence>
<evidence type="ECO:0000256" key="4">
    <source>
        <dbReference type="SAM" id="MobiDB-lite"/>
    </source>
</evidence>
<evidence type="ECO:0000305" key="5"/>
<dbReference type="EC" id="3.1.3.16"/>
<dbReference type="EMBL" id="HE600982">
    <property type="protein sequence ID" value="CAP22030.3"/>
    <property type="molecule type" value="Genomic_DNA"/>
</dbReference>
<dbReference type="SMR" id="Q627N3"/>
<dbReference type="FunCoup" id="Q627N3">
    <property type="interactions" value="2845"/>
</dbReference>
<dbReference type="STRING" id="6238.Q627N3"/>
<dbReference type="EnsemblMetazoa" id="CBG00598.1">
    <property type="protein sequence ID" value="CBG00598.1"/>
    <property type="gene ID" value="WBGene00023971"/>
</dbReference>
<dbReference type="KEGG" id="cbr:CBG_00598"/>
<dbReference type="CTD" id="8571707"/>
<dbReference type="WormBase" id="CBG00598">
    <property type="protein sequence ID" value="CBP00193"/>
    <property type="gene ID" value="WBGene00023971"/>
    <property type="gene designation" value="Cbr-gsp-2"/>
</dbReference>
<dbReference type="eggNOG" id="KOG0374">
    <property type="taxonomic scope" value="Eukaryota"/>
</dbReference>
<dbReference type="HOGENOM" id="CLU_004962_0_0_1"/>
<dbReference type="InParanoid" id="Q627N3"/>
<dbReference type="OMA" id="EEHEIRY"/>
<dbReference type="OrthoDB" id="1930084at2759"/>
<dbReference type="Proteomes" id="UP000008549">
    <property type="component" value="Unassembled WGS sequence"/>
</dbReference>
<dbReference type="GO" id="GO:0005694">
    <property type="term" value="C:chromosome"/>
    <property type="evidence" value="ECO:0007669"/>
    <property type="project" value="EnsemblMetazoa"/>
</dbReference>
<dbReference type="GO" id="GO:0005737">
    <property type="term" value="C:cytoplasm"/>
    <property type="evidence" value="ECO:0000318"/>
    <property type="project" value="GO_Central"/>
</dbReference>
<dbReference type="GO" id="GO:0031965">
    <property type="term" value="C:nuclear membrane"/>
    <property type="evidence" value="ECO:0007669"/>
    <property type="project" value="EnsemblMetazoa"/>
</dbReference>
<dbReference type="GO" id="GO:0005634">
    <property type="term" value="C:nucleus"/>
    <property type="evidence" value="ECO:0000318"/>
    <property type="project" value="GO_Central"/>
</dbReference>
<dbReference type="GO" id="GO:0046872">
    <property type="term" value="F:metal ion binding"/>
    <property type="evidence" value="ECO:0007669"/>
    <property type="project" value="UniProtKB-KW"/>
</dbReference>
<dbReference type="GO" id="GO:0004722">
    <property type="term" value="F:protein serine/threonine phosphatase activity"/>
    <property type="evidence" value="ECO:0000318"/>
    <property type="project" value="GO_Central"/>
</dbReference>
<dbReference type="GO" id="GO:0051301">
    <property type="term" value="P:cell division"/>
    <property type="evidence" value="ECO:0007669"/>
    <property type="project" value="UniProtKB-KW"/>
</dbReference>
<dbReference type="GO" id="GO:0006325">
    <property type="term" value="P:chromatin organization"/>
    <property type="evidence" value="ECO:0007669"/>
    <property type="project" value="UniProtKB-KW"/>
</dbReference>
<dbReference type="GO" id="GO:0051321">
    <property type="term" value="P:meiotic cell cycle"/>
    <property type="evidence" value="ECO:0007669"/>
    <property type="project" value="UniProtKB-KW"/>
</dbReference>
<dbReference type="CDD" id="cd07414">
    <property type="entry name" value="MPP_PP1_PPKL"/>
    <property type="match status" value="1"/>
</dbReference>
<dbReference type="FunFam" id="3.60.21.10:FF:000004">
    <property type="entry name" value="Serine/threonine-protein phosphatase"/>
    <property type="match status" value="1"/>
</dbReference>
<dbReference type="Gene3D" id="3.60.21.10">
    <property type="match status" value="1"/>
</dbReference>
<dbReference type="InterPro" id="IPR004843">
    <property type="entry name" value="Calcineurin-like_PHP_ApaH"/>
</dbReference>
<dbReference type="InterPro" id="IPR029052">
    <property type="entry name" value="Metallo-depent_PP-like"/>
</dbReference>
<dbReference type="InterPro" id="IPR050341">
    <property type="entry name" value="PP1_catalytic_subunit"/>
</dbReference>
<dbReference type="InterPro" id="IPR006186">
    <property type="entry name" value="Ser/Thr-sp_prot-phosphatase"/>
</dbReference>
<dbReference type="InterPro" id="IPR031675">
    <property type="entry name" value="STPPase_N"/>
</dbReference>
<dbReference type="PANTHER" id="PTHR11668">
    <property type="entry name" value="SERINE/THREONINE PROTEIN PHOSPHATASE"/>
    <property type="match status" value="1"/>
</dbReference>
<dbReference type="PANTHER" id="PTHR11668:SF300">
    <property type="entry name" value="SERINE_THREONINE-PROTEIN PHOSPHATASE"/>
    <property type="match status" value="1"/>
</dbReference>
<dbReference type="Pfam" id="PF00149">
    <property type="entry name" value="Metallophos"/>
    <property type="match status" value="1"/>
</dbReference>
<dbReference type="Pfam" id="PF16891">
    <property type="entry name" value="STPPase_N"/>
    <property type="match status" value="1"/>
</dbReference>
<dbReference type="PRINTS" id="PR00114">
    <property type="entry name" value="STPHPHTASE"/>
</dbReference>
<dbReference type="SMART" id="SM00156">
    <property type="entry name" value="PP2Ac"/>
    <property type="match status" value="1"/>
</dbReference>
<dbReference type="SUPFAM" id="SSF56300">
    <property type="entry name" value="Metallo-dependent phosphatases"/>
    <property type="match status" value="1"/>
</dbReference>
<dbReference type="PROSITE" id="PS00125">
    <property type="entry name" value="SER_THR_PHOSPHATASE"/>
    <property type="match status" value="1"/>
</dbReference>